<comment type="function">
    <text evidence="1">Catalyzes the attachment of tyrosine to tRNA(Tyr) in a two-step reaction: tyrosine is first activated by ATP to form Tyr-AMP and then transferred to the acceptor end of tRNA(Tyr).</text>
</comment>
<comment type="catalytic activity">
    <reaction evidence="1">
        <text>tRNA(Tyr) + L-tyrosine + ATP = L-tyrosyl-tRNA(Tyr) + AMP + diphosphate + H(+)</text>
        <dbReference type="Rhea" id="RHEA:10220"/>
        <dbReference type="Rhea" id="RHEA-COMP:9706"/>
        <dbReference type="Rhea" id="RHEA-COMP:9707"/>
        <dbReference type="ChEBI" id="CHEBI:15378"/>
        <dbReference type="ChEBI" id="CHEBI:30616"/>
        <dbReference type="ChEBI" id="CHEBI:33019"/>
        <dbReference type="ChEBI" id="CHEBI:58315"/>
        <dbReference type="ChEBI" id="CHEBI:78442"/>
        <dbReference type="ChEBI" id="CHEBI:78536"/>
        <dbReference type="ChEBI" id="CHEBI:456215"/>
        <dbReference type="EC" id="6.1.1.1"/>
    </reaction>
</comment>
<comment type="subunit">
    <text evidence="1">Homodimer.</text>
</comment>
<comment type="subcellular location">
    <subcellularLocation>
        <location evidence="1">Cytoplasm</location>
    </subcellularLocation>
</comment>
<comment type="similarity">
    <text evidence="1">Belongs to the class-I aminoacyl-tRNA synthetase family. TyrS type 1 subfamily.</text>
</comment>
<comment type="sequence caution" evidence="2">
    <conflict type="erroneous initiation">
        <sequence resource="EMBL-CDS" id="BAC24484"/>
    </conflict>
</comment>
<accession>Q8D2L6</accession>
<name>SYY_WIGBR</name>
<sequence>MKDLIQELKNRKLISKLTDEINIKKILKEKKINLYCGFDPTADSLHIGHLIPLLFLKRFSNFGHIPIIVIGGATALLGDFNIKKNKSFLEKYKNVKNWSKTIENQILNIIKYENNNCNLIILNNYLWIKELKIINFLRDIGRFISINKILRKEIVKKKLKENQHISFMEFSYSLLQGYDYYFLNLNYDVYIQIGGSDQWSNIISGIDLVNKINKKKVYGITTPLLTRSNGSKLGKSDDKEKVIWLDKKKTSVYEFYQFWLNTPDEKIFRYLKLFTFISMSEINKLKCKFFNKEINPFQAQKILADEITKIVHGISQLRLAQKATNFLFYKKISELSIEDFYLLSTSGIKIYYPKSNENIKDILVNSKLSKSKNNAKSVILSSSIRINNKKQKSIDFMFKKEDKLFNLFTLIKKGKKDFCLLIWKNY</sequence>
<protein>
    <recommendedName>
        <fullName evidence="1">Tyrosine--tRNA ligase</fullName>
        <ecNumber evidence="1">6.1.1.1</ecNumber>
    </recommendedName>
    <alternativeName>
        <fullName evidence="1">Tyrosyl-tRNA synthetase</fullName>
        <shortName evidence="1">TyrRS</shortName>
    </alternativeName>
</protein>
<reference key="1">
    <citation type="journal article" date="2002" name="Nat. Genet.">
        <title>Genome sequence of the endocellular obligate symbiont of tsetse flies, Wigglesworthia glossinidia.</title>
        <authorList>
            <person name="Akman L."/>
            <person name="Yamashita A."/>
            <person name="Watanabe H."/>
            <person name="Oshima K."/>
            <person name="Shiba T."/>
            <person name="Hattori M."/>
            <person name="Aksoy S."/>
        </authorList>
    </citation>
    <scope>NUCLEOTIDE SEQUENCE [LARGE SCALE GENOMIC DNA]</scope>
</reference>
<keyword id="KW-0030">Aminoacyl-tRNA synthetase</keyword>
<keyword id="KW-0067">ATP-binding</keyword>
<keyword id="KW-0963">Cytoplasm</keyword>
<keyword id="KW-0436">Ligase</keyword>
<keyword id="KW-0547">Nucleotide-binding</keyword>
<keyword id="KW-0648">Protein biosynthesis</keyword>
<keyword id="KW-1185">Reference proteome</keyword>
<keyword id="KW-0694">RNA-binding</keyword>
<proteinExistence type="inferred from homology"/>
<feature type="chain" id="PRO_0000234813" description="Tyrosine--tRNA ligase">
    <location>
        <begin position="1"/>
        <end position="426"/>
    </location>
</feature>
<feature type="domain" description="S4 RNA-binding" evidence="1">
    <location>
        <begin position="357"/>
        <end position="414"/>
    </location>
</feature>
<feature type="short sequence motif" description="'HIGH' region">
    <location>
        <begin position="40"/>
        <end position="49"/>
    </location>
</feature>
<feature type="short sequence motif" description="'KMSKS' region">
    <location>
        <begin position="232"/>
        <end position="236"/>
    </location>
</feature>
<feature type="binding site" evidence="1">
    <location>
        <position position="35"/>
    </location>
    <ligand>
        <name>L-tyrosine</name>
        <dbReference type="ChEBI" id="CHEBI:58315"/>
    </ligand>
</feature>
<feature type="binding site" evidence="1">
    <location>
        <position position="172"/>
    </location>
    <ligand>
        <name>L-tyrosine</name>
        <dbReference type="ChEBI" id="CHEBI:58315"/>
    </ligand>
</feature>
<feature type="binding site" evidence="1">
    <location>
        <position position="176"/>
    </location>
    <ligand>
        <name>L-tyrosine</name>
        <dbReference type="ChEBI" id="CHEBI:58315"/>
    </ligand>
</feature>
<feature type="binding site" evidence="1">
    <location>
        <position position="235"/>
    </location>
    <ligand>
        <name>ATP</name>
        <dbReference type="ChEBI" id="CHEBI:30616"/>
    </ligand>
</feature>
<organism>
    <name type="scientific">Wigglesworthia glossinidia brevipalpis</name>
    <dbReference type="NCBI Taxonomy" id="36870"/>
    <lineage>
        <taxon>Bacteria</taxon>
        <taxon>Pseudomonadati</taxon>
        <taxon>Pseudomonadota</taxon>
        <taxon>Gammaproteobacteria</taxon>
        <taxon>Enterobacterales</taxon>
        <taxon>Erwiniaceae</taxon>
        <taxon>Wigglesworthia</taxon>
    </lineage>
</organism>
<dbReference type="EC" id="6.1.1.1" evidence="1"/>
<dbReference type="EMBL" id="BA000021">
    <property type="protein sequence ID" value="BAC24484.1"/>
    <property type="status" value="ALT_INIT"/>
    <property type="molecule type" value="Genomic_DNA"/>
</dbReference>
<dbReference type="SMR" id="Q8D2L6"/>
<dbReference type="STRING" id="36870.gene:10368838"/>
<dbReference type="KEGG" id="wbr:tyrS"/>
<dbReference type="eggNOG" id="COG0162">
    <property type="taxonomic scope" value="Bacteria"/>
</dbReference>
<dbReference type="HOGENOM" id="CLU_024003_0_3_6"/>
<dbReference type="OrthoDB" id="9804243at2"/>
<dbReference type="Proteomes" id="UP000000562">
    <property type="component" value="Chromosome"/>
</dbReference>
<dbReference type="GO" id="GO:0005829">
    <property type="term" value="C:cytosol"/>
    <property type="evidence" value="ECO:0007669"/>
    <property type="project" value="TreeGrafter"/>
</dbReference>
<dbReference type="GO" id="GO:0005524">
    <property type="term" value="F:ATP binding"/>
    <property type="evidence" value="ECO:0007669"/>
    <property type="project" value="UniProtKB-UniRule"/>
</dbReference>
<dbReference type="GO" id="GO:0003723">
    <property type="term" value="F:RNA binding"/>
    <property type="evidence" value="ECO:0007669"/>
    <property type="project" value="UniProtKB-KW"/>
</dbReference>
<dbReference type="GO" id="GO:0004831">
    <property type="term" value="F:tyrosine-tRNA ligase activity"/>
    <property type="evidence" value="ECO:0007669"/>
    <property type="project" value="UniProtKB-UniRule"/>
</dbReference>
<dbReference type="GO" id="GO:0006437">
    <property type="term" value="P:tyrosyl-tRNA aminoacylation"/>
    <property type="evidence" value="ECO:0007669"/>
    <property type="project" value="UniProtKB-UniRule"/>
</dbReference>
<dbReference type="CDD" id="cd00805">
    <property type="entry name" value="TyrRS_core"/>
    <property type="match status" value="1"/>
</dbReference>
<dbReference type="FunFam" id="1.10.240.10:FF:000001">
    <property type="entry name" value="Tyrosine--tRNA ligase"/>
    <property type="match status" value="1"/>
</dbReference>
<dbReference type="Gene3D" id="3.40.50.620">
    <property type="entry name" value="HUPs"/>
    <property type="match status" value="1"/>
</dbReference>
<dbReference type="Gene3D" id="3.10.290.10">
    <property type="entry name" value="RNA-binding S4 domain"/>
    <property type="match status" value="1"/>
</dbReference>
<dbReference type="Gene3D" id="1.10.240.10">
    <property type="entry name" value="Tyrosyl-Transfer RNA Synthetase"/>
    <property type="match status" value="1"/>
</dbReference>
<dbReference type="HAMAP" id="MF_02006">
    <property type="entry name" value="Tyr_tRNA_synth_type1"/>
    <property type="match status" value="1"/>
</dbReference>
<dbReference type="InterPro" id="IPR001412">
    <property type="entry name" value="aa-tRNA-synth_I_CS"/>
</dbReference>
<dbReference type="InterPro" id="IPR002305">
    <property type="entry name" value="aa-tRNA-synth_Ic"/>
</dbReference>
<dbReference type="InterPro" id="IPR014729">
    <property type="entry name" value="Rossmann-like_a/b/a_fold"/>
</dbReference>
<dbReference type="InterPro" id="IPR036986">
    <property type="entry name" value="S4_RNA-bd_sf"/>
</dbReference>
<dbReference type="InterPro" id="IPR054608">
    <property type="entry name" value="SYY-like_C"/>
</dbReference>
<dbReference type="InterPro" id="IPR002307">
    <property type="entry name" value="Tyr-tRNA-ligase"/>
</dbReference>
<dbReference type="InterPro" id="IPR024088">
    <property type="entry name" value="Tyr-tRNA-ligase_bac-type"/>
</dbReference>
<dbReference type="InterPro" id="IPR024107">
    <property type="entry name" value="Tyr-tRNA-ligase_bac_1"/>
</dbReference>
<dbReference type="NCBIfam" id="TIGR00234">
    <property type="entry name" value="tyrS"/>
    <property type="match status" value="1"/>
</dbReference>
<dbReference type="PANTHER" id="PTHR11766:SF0">
    <property type="entry name" value="TYROSINE--TRNA LIGASE, MITOCHONDRIAL"/>
    <property type="match status" value="1"/>
</dbReference>
<dbReference type="PANTHER" id="PTHR11766">
    <property type="entry name" value="TYROSYL-TRNA SYNTHETASE"/>
    <property type="match status" value="1"/>
</dbReference>
<dbReference type="Pfam" id="PF22421">
    <property type="entry name" value="SYY_C-terminal"/>
    <property type="match status" value="1"/>
</dbReference>
<dbReference type="Pfam" id="PF00579">
    <property type="entry name" value="tRNA-synt_1b"/>
    <property type="match status" value="1"/>
</dbReference>
<dbReference type="PRINTS" id="PR01040">
    <property type="entry name" value="TRNASYNTHTYR"/>
</dbReference>
<dbReference type="SUPFAM" id="SSF55174">
    <property type="entry name" value="Alpha-L RNA-binding motif"/>
    <property type="match status" value="1"/>
</dbReference>
<dbReference type="SUPFAM" id="SSF52374">
    <property type="entry name" value="Nucleotidylyl transferase"/>
    <property type="match status" value="1"/>
</dbReference>
<dbReference type="PROSITE" id="PS00178">
    <property type="entry name" value="AA_TRNA_LIGASE_I"/>
    <property type="match status" value="1"/>
</dbReference>
<gene>
    <name evidence="1" type="primary">tyrS</name>
    <name type="ordered locus">WIGBR3380</name>
</gene>
<evidence type="ECO:0000255" key="1">
    <source>
        <dbReference type="HAMAP-Rule" id="MF_02006"/>
    </source>
</evidence>
<evidence type="ECO:0000305" key="2"/>